<name>ALR1_RHILO</name>
<protein>
    <recommendedName>
        <fullName>Alanine racemase, biosynthetic</fullName>
        <ecNumber>5.1.1.1</ecNumber>
    </recommendedName>
</protein>
<reference key="1">
    <citation type="journal article" date="2000" name="DNA Res.">
        <title>Complete genome structure of the nitrogen-fixing symbiotic bacterium Mesorhizobium loti.</title>
        <authorList>
            <person name="Kaneko T."/>
            <person name="Nakamura Y."/>
            <person name="Sato S."/>
            <person name="Asamizu E."/>
            <person name="Kato T."/>
            <person name="Sasamoto S."/>
            <person name="Watanabe A."/>
            <person name="Idesawa K."/>
            <person name="Ishikawa A."/>
            <person name="Kawashima K."/>
            <person name="Kimura T."/>
            <person name="Kishida Y."/>
            <person name="Kiyokawa C."/>
            <person name="Kohara M."/>
            <person name="Matsumoto M."/>
            <person name="Matsuno A."/>
            <person name="Mochizuki Y."/>
            <person name="Nakayama S."/>
            <person name="Nakazaki N."/>
            <person name="Shimpo S."/>
            <person name="Sugimoto M."/>
            <person name="Takeuchi C."/>
            <person name="Yamada M."/>
            <person name="Tabata S."/>
        </authorList>
    </citation>
    <scope>NUCLEOTIDE SEQUENCE [LARGE SCALE GENOMIC DNA]</scope>
    <source>
        <strain>LMG 29417 / CECT 9101 / MAFF 303099</strain>
    </source>
</reference>
<organism>
    <name type="scientific">Mesorhizobium japonicum (strain LMG 29417 / CECT 9101 / MAFF 303099)</name>
    <name type="common">Mesorhizobium loti (strain MAFF 303099)</name>
    <dbReference type="NCBI Taxonomy" id="266835"/>
    <lineage>
        <taxon>Bacteria</taxon>
        <taxon>Pseudomonadati</taxon>
        <taxon>Pseudomonadota</taxon>
        <taxon>Alphaproteobacteria</taxon>
        <taxon>Hyphomicrobiales</taxon>
        <taxon>Phyllobacteriaceae</taxon>
        <taxon>Mesorhizobium</taxon>
    </lineage>
</organism>
<evidence type="ECO:0000250" key="1"/>
<evidence type="ECO:0000256" key="2">
    <source>
        <dbReference type="SAM" id="MobiDB-lite"/>
    </source>
</evidence>
<evidence type="ECO:0000305" key="3"/>
<sequence length="397" mass="43462">MMLSIVRSVDVVLEIDLAAIRANFQKISTLVGDKVKVAAVVKSDAYGLGLVDIARTLIDAGCDLLFVANLDEALLLRSSFSRVAIAVFRDEFDRFGTWYRSHGLIPVVNNCKELHAVGTAGEPQSYFLNVETGFSRFGLSVGDIQREYLLRTFERYRPSIVLSHLACGECISDPMNQLQRDRFRTVYDLLKPTRGSLSASAGVWLGKSYHFDMVRVGSALYGIHNAGVQTNPLKPVVKLRARILDVRSVPAGEAVGYGATFRTDRASRVAIVGIGYKHGLPWSCANKIFVRLAEYSAPSIGRISMEYMIIDITDVPARRCSPGTFAELLSEDFTVNDLGAAAGVSPQEALTRLGAGCTRKYLNLFPPSAAFTANRPTEAMSNPSRAKSRPMDKQALI</sequence>
<accession>Q98A05</accession>
<comment type="function">
    <text evidence="1">Catalyzes the interconversion of L-alanine and D-alanine. Provides the D-alanine required for cell wall biosynthesis (By similarity).</text>
</comment>
<comment type="catalytic activity">
    <reaction>
        <text>L-alanine = D-alanine</text>
        <dbReference type="Rhea" id="RHEA:20249"/>
        <dbReference type="ChEBI" id="CHEBI:57416"/>
        <dbReference type="ChEBI" id="CHEBI:57972"/>
        <dbReference type="EC" id="5.1.1.1"/>
    </reaction>
</comment>
<comment type="cofactor">
    <cofactor evidence="1">
        <name>pyridoxal 5'-phosphate</name>
        <dbReference type="ChEBI" id="CHEBI:597326"/>
    </cofactor>
</comment>
<comment type="pathway">
    <text>Amino-acid biosynthesis; D-alanine biosynthesis; D-alanine from L-alanine: step 1/1.</text>
</comment>
<comment type="pathway">
    <text>Cell wall biogenesis; peptidoglycan biosynthesis.</text>
</comment>
<comment type="similarity">
    <text evidence="3">Belongs to the alanine racemase family.</text>
</comment>
<dbReference type="EC" id="5.1.1.1"/>
<dbReference type="EMBL" id="BA000012">
    <property type="protein sequence ID" value="BAB52539.1"/>
    <property type="molecule type" value="Genomic_DNA"/>
</dbReference>
<dbReference type="RefSeq" id="WP_010913858.1">
    <property type="nucleotide sequence ID" value="NC_002678.2"/>
</dbReference>
<dbReference type="SMR" id="Q98A05"/>
<dbReference type="KEGG" id="mlo:mll6211"/>
<dbReference type="PATRIC" id="fig|266835.9.peg.4942"/>
<dbReference type="eggNOG" id="COG0787">
    <property type="taxonomic scope" value="Bacteria"/>
</dbReference>
<dbReference type="HOGENOM" id="CLU_028393_1_1_5"/>
<dbReference type="UniPathway" id="UPA00042">
    <property type="reaction ID" value="UER00497"/>
</dbReference>
<dbReference type="UniPathway" id="UPA00219"/>
<dbReference type="Proteomes" id="UP000000552">
    <property type="component" value="Chromosome"/>
</dbReference>
<dbReference type="GO" id="GO:0005829">
    <property type="term" value="C:cytosol"/>
    <property type="evidence" value="ECO:0007669"/>
    <property type="project" value="TreeGrafter"/>
</dbReference>
<dbReference type="GO" id="GO:0008784">
    <property type="term" value="F:alanine racemase activity"/>
    <property type="evidence" value="ECO:0007669"/>
    <property type="project" value="UniProtKB-UniRule"/>
</dbReference>
<dbReference type="GO" id="GO:0030170">
    <property type="term" value="F:pyridoxal phosphate binding"/>
    <property type="evidence" value="ECO:0007669"/>
    <property type="project" value="UniProtKB-UniRule"/>
</dbReference>
<dbReference type="GO" id="GO:0071555">
    <property type="term" value="P:cell wall organization"/>
    <property type="evidence" value="ECO:0007669"/>
    <property type="project" value="UniProtKB-KW"/>
</dbReference>
<dbReference type="GO" id="GO:0030632">
    <property type="term" value="P:D-alanine biosynthetic process"/>
    <property type="evidence" value="ECO:0007669"/>
    <property type="project" value="UniProtKB-UniRule"/>
</dbReference>
<dbReference type="GO" id="GO:0009252">
    <property type="term" value="P:peptidoglycan biosynthetic process"/>
    <property type="evidence" value="ECO:0007669"/>
    <property type="project" value="UniProtKB-UniPathway"/>
</dbReference>
<dbReference type="GO" id="GO:0008360">
    <property type="term" value="P:regulation of cell shape"/>
    <property type="evidence" value="ECO:0007669"/>
    <property type="project" value="UniProtKB-KW"/>
</dbReference>
<dbReference type="CDD" id="cd00430">
    <property type="entry name" value="PLPDE_III_AR"/>
    <property type="match status" value="1"/>
</dbReference>
<dbReference type="Gene3D" id="3.20.20.10">
    <property type="entry name" value="Alanine racemase"/>
    <property type="match status" value="1"/>
</dbReference>
<dbReference type="Gene3D" id="2.40.37.10">
    <property type="entry name" value="Lyase, Ornithine Decarboxylase, Chain A, domain 1"/>
    <property type="match status" value="1"/>
</dbReference>
<dbReference type="HAMAP" id="MF_01201">
    <property type="entry name" value="Ala_racemase"/>
    <property type="match status" value="1"/>
</dbReference>
<dbReference type="InterPro" id="IPR000821">
    <property type="entry name" value="Ala_racemase"/>
</dbReference>
<dbReference type="InterPro" id="IPR009006">
    <property type="entry name" value="Ala_racemase/Decarboxylase_C"/>
</dbReference>
<dbReference type="InterPro" id="IPR011079">
    <property type="entry name" value="Ala_racemase_C"/>
</dbReference>
<dbReference type="InterPro" id="IPR001608">
    <property type="entry name" value="Ala_racemase_N"/>
</dbReference>
<dbReference type="InterPro" id="IPR020622">
    <property type="entry name" value="Ala_racemase_pyridoxalP-BS"/>
</dbReference>
<dbReference type="InterPro" id="IPR029066">
    <property type="entry name" value="PLP-binding_barrel"/>
</dbReference>
<dbReference type="NCBIfam" id="TIGR00492">
    <property type="entry name" value="alr"/>
    <property type="match status" value="1"/>
</dbReference>
<dbReference type="PANTHER" id="PTHR30511">
    <property type="entry name" value="ALANINE RACEMASE"/>
    <property type="match status" value="1"/>
</dbReference>
<dbReference type="PANTHER" id="PTHR30511:SF0">
    <property type="entry name" value="ALANINE RACEMASE, CATABOLIC-RELATED"/>
    <property type="match status" value="1"/>
</dbReference>
<dbReference type="Pfam" id="PF00842">
    <property type="entry name" value="Ala_racemase_C"/>
    <property type="match status" value="1"/>
</dbReference>
<dbReference type="Pfam" id="PF01168">
    <property type="entry name" value="Ala_racemase_N"/>
    <property type="match status" value="1"/>
</dbReference>
<dbReference type="PRINTS" id="PR00992">
    <property type="entry name" value="ALARACEMASE"/>
</dbReference>
<dbReference type="SMART" id="SM01005">
    <property type="entry name" value="Ala_racemase_C"/>
    <property type="match status" value="1"/>
</dbReference>
<dbReference type="SUPFAM" id="SSF50621">
    <property type="entry name" value="Alanine racemase C-terminal domain-like"/>
    <property type="match status" value="1"/>
</dbReference>
<dbReference type="SUPFAM" id="SSF51419">
    <property type="entry name" value="PLP-binding barrel"/>
    <property type="match status" value="1"/>
</dbReference>
<dbReference type="PROSITE" id="PS00395">
    <property type="entry name" value="ALANINE_RACEMASE"/>
    <property type="match status" value="1"/>
</dbReference>
<keyword id="KW-0133">Cell shape</keyword>
<keyword id="KW-0961">Cell wall biogenesis/degradation</keyword>
<keyword id="KW-0413">Isomerase</keyword>
<keyword id="KW-0573">Peptidoglycan synthesis</keyword>
<keyword id="KW-0663">Pyridoxal phosphate</keyword>
<proteinExistence type="inferred from homology"/>
<feature type="chain" id="PRO_0000114551" description="Alanine racemase, biosynthetic">
    <location>
        <begin position="1"/>
        <end position="397"/>
    </location>
</feature>
<feature type="region of interest" description="Disordered" evidence="2">
    <location>
        <begin position="373"/>
        <end position="397"/>
    </location>
</feature>
<feature type="active site" description="Proton acceptor; specific for D-alanine" evidence="1">
    <location>
        <position position="42"/>
    </location>
</feature>
<feature type="active site" description="Proton acceptor; specific for L-alanine" evidence="1">
    <location>
        <position position="257"/>
    </location>
</feature>
<feature type="binding site" evidence="1">
    <location>
        <position position="136"/>
    </location>
    <ligand>
        <name>substrate</name>
    </ligand>
</feature>
<feature type="binding site" evidence="1">
    <location>
        <position position="305"/>
    </location>
    <ligand>
        <name>substrate</name>
    </ligand>
</feature>
<feature type="modified residue" description="N6-(pyridoxal phosphate)lysine" evidence="1">
    <location>
        <position position="42"/>
    </location>
</feature>
<gene>
    <name type="primary">alr</name>
    <name type="ordered locus">mll6211</name>
</gene>